<accession>Q88V76</accession>
<accession>F9UQD1</accession>
<sequence>MATFEHTTVLLHEAIAALNVRPDGIYVDCTLGGGGHSREILQQLGLEGHLYSFDQDQTAIDYNQSNLATYLERGQVTFIKSNFANLKTELNARGLDHVDGVVYDLGVSSPQFDDAARGFSYQHDAPLDMRMDQSQKLTAQTVVNTWPYADLVRIFYRYGEEKFSKQVARLIERERAVQPIVTTGQLVEIIKNAIPARARRTGGHPAKRVFQAIRIAVNNELGVLETSLEQAIDLINVHGRVSVITFQSLEDRLVKTIFKEHSDLPELPPGLPVIPAEMQPDYRLVSRKPVVPSDAEIEANRRARSAKLRAIERLKITNK</sequence>
<keyword id="KW-0963">Cytoplasm</keyword>
<keyword id="KW-0489">Methyltransferase</keyword>
<keyword id="KW-1185">Reference proteome</keyword>
<keyword id="KW-0698">rRNA processing</keyword>
<keyword id="KW-0949">S-adenosyl-L-methionine</keyword>
<keyword id="KW-0808">Transferase</keyword>
<evidence type="ECO:0000255" key="1">
    <source>
        <dbReference type="HAMAP-Rule" id="MF_01007"/>
    </source>
</evidence>
<proteinExistence type="inferred from homology"/>
<reference key="1">
    <citation type="journal article" date="2003" name="Proc. Natl. Acad. Sci. U.S.A.">
        <title>Complete genome sequence of Lactobacillus plantarum WCFS1.</title>
        <authorList>
            <person name="Kleerebezem M."/>
            <person name="Boekhorst J."/>
            <person name="van Kranenburg R."/>
            <person name="Molenaar D."/>
            <person name="Kuipers O.P."/>
            <person name="Leer R."/>
            <person name="Tarchini R."/>
            <person name="Peters S.A."/>
            <person name="Sandbrink H.M."/>
            <person name="Fiers M.W.E.J."/>
            <person name="Stiekema W."/>
            <person name="Klein Lankhorst R.M."/>
            <person name="Bron P.A."/>
            <person name="Hoffer S.M."/>
            <person name="Nierop Groot M.N."/>
            <person name="Kerkhoven R."/>
            <person name="De Vries M."/>
            <person name="Ursing B."/>
            <person name="De Vos W.M."/>
            <person name="Siezen R.J."/>
        </authorList>
    </citation>
    <scope>NUCLEOTIDE SEQUENCE [LARGE SCALE GENOMIC DNA]</scope>
    <source>
        <strain>ATCC BAA-793 / NCIMB 8826 / WCFS1</strain>
    </source>
</reference>
<reference key="2">
    <citation type="journal article" date="2012" name="J. Bacteriol.">
        <title>Complete resequencing and reannotation of the Lactobacillus plantarum WCFS1 genome.</title>
        <authorList>
            <person name="Siezen R.J."/>
            <person name="Francke C."/>
            <person name="Renckens B."/>
            <person name="Boekhorst J."/>
            <person name="Wels M."/>
            <person name="Kleerebezem M."/>
            <person name="van Hijum S.A."/>
        </authorList>
    </citation>
    <scope>NUCLEOTIDE SEQUENCE [LARGE SCALE GENOMIC DNA]</scope>
    <scope>GENOME REANNOTATION</scope>
    <source>
        <strain>ATCC BAA-793 / NCIMB 8826 / WCFS1</strain>
    </source>
</reference>
<protein>
    <recommendedName>
        <fullName evidence="1">Ribosomal RNA small subunit methyltransferase H</fullName>
        <ecNumber evidence="1">2.1.1.199</ecNumber>
    </recommendedName>
    <alternativeName>
        <fullName evidence="1">16S rRNA m(4)C1402 methyltransferase</fullName>
    </alternativeName>
    <alternativeName>
        <fullName evidence="1">rRNA (cytosine-N(4)-)-methyltransferase RsmH</fullName>
    </alternativeName>
</protein>
<organism>
    <name type="scientific">Lactiplantibacillus plantarum (strain ATCC BAA-793 / NCIMB 8826 / WCFS1)</name>
    <name type="common">Lactobacillus plantarum</name>
    <dbReference type="NCBI Taxonomy" id="220668"/>
    <lineage>
        <taxon>Bacteria</taxon>
        <taxon>Bacillati</taxon>
        <taxon>Bacillota</taxon>
        <taxon>Bacilli</taxon>
        <taxon>Lactobacillales</taxon>
        <taxon>Lactobacillaceae</taxon>
        <taxon>Lactiplantibacillus</taxon>
    </lineage>
</organism>
<dbReference type="EC" id="2.1.1.199" evidence="1"/>
<dbReference type="EMBL" id="AL935263">
    <property type="protein sequence ID" value="CCC79420.1"/>
    <property type="molecule type" value="Genomic_DNA"/>
</dbReference>
<dbReference type="RefSeq" id="WP_003644613.1">
    <property type="nucleotide sequence ID" value="NC_004567.2"/>
</dbReference>
<dbReference type="RefSeq" id="YP_004889934.1">
    <property type="nucleotide sequence ID" value="NC_004567.2"/>
</dbReference>
<dbReference type="SMR" id="Q88V76"/>
<dbReference type="STRING" id="220668.lp_2202"/>
<dbReference type="EnsemblBacteria" id="CCC79420">
    <property type="protein sequence ID" value="CCC79420"/>
    <property type="gene ID" value="lp_2202"/>
</dbReference>
<dbReference type="KEGG" id="lpl:lp_2202"/>
<dbReference type="PATRIC" id="fig|220668.9.peg.1861"/>
<dbReference type="eggNOG" id="COG0275">
    <property type="taxonomic scope" value="Bacteria"/>
</dbReference>
<dbReference type="HOGENOM" id="CLU_038422_2_0_9"/>
<dbReference type="OrthoDB" id="9806637at2"/>
<dbReference type="PhylomeDB" id="Q88V76"/>
<dbReference type="Proteomes" id="UP000000432">
    <property type="component" value="Chromosome"/>
</dbReference>
<dbReference type="GO" id="GO:0005737">
    <property type="term" value="C:cytoplasm"/>
    <property type="evidence" value="ECO:0007669"/>
    <property type="project" value="UniProtKB-SubCell"/>
</dbReference>
<dbReference type="GO" id="GO:0071424">
    <property type="term" value="F:rRNA (cytosine-N4-)-methyltransferase activity"/>
    <property type="evidence" value="ECO:0007669"/>
    <property type="project" value="UniProtKB-UniRule"/>
</dbReference>
<dbReference type="GO" id="GO:0070475">
    <property type="term" value="P:rRNA base methylation"/>
    <property type="evidence" value="ECO:0007669"/>
    <property type="project" value="UniProtKB-UniRule"/>
</dbReference>
<dbReference type="FunFam" id="1.10.150.170:FF:000001">
    <property type="entry name" value="Ribosomal RNA small subunit methyltransferase H"/>
    <property type="match status" value="1"/>
</dbReference>
<dbReference type="Gene3D" id="1.10.150.170">
    <property type="entry name" value="Putative methyltransferase TM0872, insert domain"/>
    <property type="match status" value="1"/>
</dbReference>
<dbReference type="Gene3D" id="3.40.50.150">
    <property type="entry name" value="Vaccinia Virus protein VP39"/>
    <property type="match status" value="1"/>
</dbReference>
<dbReference type="HAMAP" id="MF_01007">
    <property type="entry name" value="16SrRNA_methyltr_H"/>
    <property type="match status" value="1"/>
</dbReference>
<dbReference type="InterPro" id="IPR002903">
    <property type="entry name" value="RsmH"/>
</dbReference>
<dbReference type="InterPro" id="IPR023397">
    <property type="entry name" value="SAM-dep_MeTrfase_MraW_recog"/>
</dbReference>
<dbReference type="InterPro" id="IPR029063">
    <property type="entry name" value="SAM-dependent_MTases_sf"/>
</dbReference>
<dbReference type="NCBIfam" id="TIGR00006">
    <property type="entry name" value="16S rRNA (cytosine(1402)-N(4))-methyltransferase RsmH"/>
    <property type="match status" value="1"/>
</dbReference>
<dbReference type="PANTHER" id="PTHR11265:SF0">
    <property type="entry name" value="12S RRNA N4-METHYLCYTIDINE METHYLTRANSFERASE"/>
    <property type="match status" value="1"/>
</dbReference>
<dbReference type="PANTHER" id="PTHR11265">
    <property type="entry name" value="S-ADENOSYL-METHYLTRANSFERASE MRAW"/>
    <property type="match status" value="1"/>
</dbReference>
<dbReference type="Pfam" id="PF01795">
    <property type="entry name" value="Methyltransf_5"/>
    <property type="match status" value="1"/>
</dbReference>
<dbReference type="PIRSF" id="PIRSF004486">
    <property type="entry name" value="MraW"/>
    <property type="match status" value="1"/>
</dbReference>
<dbReference type="SUPFAM" id="SSF81799">
    <property type="entry name" value="Putative methyltransferase TM0872, insert domain"/>
    <property type="match status" value="1"/>
</dbReference>
<dbReference type="SUPFAM" id="SSF53335">
    <property type="entry name" value="S-adenosyl-L-methionine-dependent methyltransferases"/>
    <property type="match status" value="1"/>
</dbReference>
<comment type="function">
    <text evidence="1">Specifically methylates the N4 position of cytidine in position 1402 (C1402) of 16S rRNA.</text>
</comment>
<comment type="catalytic activity">
    <reaction evidence="1">
        <text>cytidine(1402) in 16S rRNA + S-adenosyl-L-methionine = N(4)-methylcytidine(1402) in 16S rRNA + S-adenosyl-L-homocysteine + H(+)</text>
        <dbReference type="Rhea" id="RHEA:42928"/>
        <dbReference type="Rhea" id="RHEA-COMP:10286"/>
        <dbReference type="Rhea" id="RHEA-COMP:10287"/>
        <dbReference type="ChEBI" id="CHEBI:15378"/>
        <dbReference type="ChEBI" id="CHEBI:57856"/>
        <dbReference type="ChEBI" id="CHEBI:59789"/>
        <dbReference type="ChEBI" id="CHEBI:74506"/>
        <dbReference type="ChEBI" id="CHEBI:82748"/>
        <dbReference type="EC" id="2.1.1.199"/>
    </reaction>
</comment>
<comment type="subcellular location">
    <subcellularLocation>
        <location evidence="1">Cytoplasm</location>
    </subcellularLocation>
</comment>
<comment type="similarity">
    <text evidence="1">Belongs to the methyltransferase superfamily. RsmH family.</text>
</comment>
<name>RSMH_LACPL</name>
<feature type="chain" id="PRO_0000108644" description="Ribosomal RNA small subunit methyltransferase H">
    <location>
        <begin position="1"/>
        <end position="319"/>
    </location>
</feature>
<feature type="binding site" evidence="1">
    <location>
        <begin position="34"/>
        <end position="36"/>
    </location>
    <ligand>
        <name>S-adenosyl-L-methionine</name>
        <dbReference type="ChEBI" id="CHEBI:59789"/>
    </ligand>
</feature>
<feature type="binding site" evidence="1">
    <location>
        <position position="54"/>
    </location>
    <ligand>
        <name>S-adenosyl-L-methionine</name>
        <dbReference type="ChEBI" id="CHEBI:59789"/>
    </ligand>
</feature>
<feature type="binding site" evidence="1">
    <location>
        <position position="83"/>
    </location>
    <ligand>
        <name>S-adenosyl-L-methionine</name>
        <dbReference type="ChEBI" id="CHEBI:59789"/>
    </ligand>
</feature>
<feature type="binding site" evidence="1">
    <location>
        <position position="104"/>
    </location>
    <ligand>
        <name>S-adenosyl-L-methionine</name>
        <dbReference type="ChEBI" id="CHEBI:59789"/>
    </ligand>
</feature>
<feature type="binding site" evidence="1">
    <location>
        <position position="111"/>
    </location>
    <ligand>
        <name>S-adenosyl-L-methionine</name>
        <dbReference type="ChEBI" id="CHEBI:59789"/>
    </ligand>
</feature>
<gene>
    <name evidence="1" type="primary">rsmH</name>
    <name type="synonym">mraW</name>
    <name type="ordered locus">lp_2202</name>
</gene>